<protein>
    <recommendedName>
        <fullName evidence="1">Bifunctional purine biosynthesis protein PurH</fullName>
    </recommendedName>
    <domain>
        <recommendedName>
            <fullName evidence="1">Phosphoribosylaminoimidazolecarboxamide formyltransferase</fullName>
            <ecNumber evidence="1">2.1.2.3</ecNumber>
        </recommendedName>
        <alternativeName>
            <fullName evidence="1">AICAR transformylase</fullName>
        </alternativeName>
    </domain>
    <domain>
        <recommendedName>
            <fullName evidence="1">IMP cyclohydrolase</fullName>
            <ecNumber evidence="1">3.5.4.10</ecNumber>
        </recommendedName>
        <alternativeName>
            <fullName evidence="1">ATIC</fullName>
        </alternativeName>
        <alternativeName>
            <fullName evidence="1">IMP synthase</fullName>
        </alternativeName>
        <alternativeName>
            <fullName evidence="1">Inosinicase</fullName>
        </alternativeName>
    </domain>
</protein>
<keyword id="KW-0378">Hydrolase</keyword>
<keyword id="KW-0511">Multifunctional enzyme</keyword>
<keyword id="KW-0658">Purine biosynthesis</keyword>
<keyword id="KW-1185">Reference proteome</keyword>
<keyword id="KW-0808">Transferase</keyword>
<feature type="chain" id="PRO_1000018856" description="Bifunctional purine biosynthesis protein PurH">
    <location>
        <begin position="1"/>
        <end position="521"/>
    </location>
</feature>
<feature type="domain" description="MGS-like" evidence="2">
    <location>
        <begin position="1"/>
        <end position="145"/>
    </location>
</feature>
<organism>
    <name type="scientific">Burkholderia mallei (strain ATCC 23344)</name>
    <dbReference type="NCBI Taxonomy" id="243160"/>
    <lineage>
        <taxon>Bacteria</taxon>
        <taxon>Pseudomonadati</taxon>
        <taxon>Pseudomonadota</taxon>
        <taxon>Betaproteobacteria</taxon>
        <taxon>Burkholderiales</taxon>
        <taxon>Burkholderiaceae</taxon>
        <taxon>Burkholderia</taxon>
        <taxon>pseudomallei group</taxon>
    </lineage>
</organism>
<sequence>MIKQALISVSDKTGIVDFAKALSALGVKLLSTGGTAKLLADAGLPVTEVADYTGFPEMLDGRVKTLHPKVHGGILARRDLPEHMQALEAHGIPTIDLLVVNLYPFVQTIAKDDCTLADAIENIDIGGPTMLRSAAKNHRDVTVVVDPADYAVVLDEMKANGNTLGYKTNFRLATKVFAHTAQYDGAITNYLTSLGDDLQHGSRSAYPATLNLAFDKVQDLRYGENPHQSAAFYRDVATPAGALANYRQLQGKELSYNNIADSDAAWECVKTFDAPACVIIKHANPCGVAVGADAGEAYAKAFQTDPTSAFGGIIAFNREVDEAAAQAVAKQFVEVLIAPSFSDAAKQVFAAKQNVRLLEIALGEGHNAFDLKRVGGGLLVQSLDSKNVQPRELRVVTKRHPTPKEMDDLLFAWRVAKYVKSNAIVFCGNGMTLGVGAGQMSRVDSARIASIKAQNAGLTLAGSAVASDAFFPFRDGLDVVVAAGATCVIQPGGSVRDDEVIAAADEHNIAMVVTGVRHFRH</sequence>
<proteinExistence type="inferred from homology"/>
<gene>
    <name evidence="1" type="primary">purH</name>
    <name type="ordered locus">BMA2356</name>
</gene>
<evidence type="ECO:0000255" key="1">
    <source>
        <dbReference type="HAMAP-Rule" id="MF_00139"/>
    </source>
</evidence>
<evidence type="ECO:0000255" key="2">
    <source>
        <dbReference type="PROSITE-ProRule" id="PRU01202"/>
    </source>
</evidence>
<comment type="catalytic activity">
    <reaction evidence="1">
        <text>(6R)-10-formyltetrahydrofolate + 5-amino-1-(5-phospho-beta-D-ribosyl)imidazole-4-carboxamide = 5-formamido-1-(5-phospho-D-ribosyl)imidazole-4-carboxamide + (6S)-5,6,7,8-tetrahydrofolate</text>
        <dbReference type="Rhea" id="RHEA:22192"/>
        <dbReference type="ChEBI" id="CHEBI:57453"/>
        <dbReference type="ChEBI" id="CHEBI:58467"/>
        <dbReference type="ChEBI" id="CHEBI:58475"/>
        <dbReference type="ChEBI" id="CHEBI:195366"/>
        <dbReference type="EC" id="2.1.2.3"/>
    </reaction>
</comment>
<comment type="catalytic activity">
    <reaction evidence="1">
        <text>IMP + H2O = 5-formamido-1-(5-phospho-D-ribosyl)imidazole-4-carboxamide</text>
        <dbReference type="Rhea" id="RHEA:18445"/>
        <dbReference type="ChEBI" id="CHEBI:15377"/>
        <dbReference type="ChEBI" id="CHEBI:58053"/>
        <dbReference type="ChEBI" id="CHEBI:58467"/>
        <dbReference type="EC" id="3.5.4.10"/>
    </reaction>
</comment>
<comment type="pathway">
    <text evidence="1">Purine metabolism; IMP biosynthesis via de novo pathway; 5-formamido-1-(5-phospho-D-ribosyl)imidazole-4-carboxamide from 5-amino-1-(5-phospho-D-ribosyl)imidazole-4-carboxamide (10-formyl THF route): step 1/1.</text>
</comment>
<comment type="pathway">
    <text evidence="1">Purine metabolism; IMP biosynthesis via de novo pathway; IMP from 5-formamido-1-(5-phospho-D-ribosyl)imidazole-4-carboxamide: step 1/1.</text>
</comment>
<comment type="domain">
    <text evidence="1">The IMP cyclohydrolase activity resides in the N-terminal region.</text>
</comment>
<comment type="similarity">
    <text evidence="1">Belongs to the PurH family.</text>
</comment>
<reference key="1">
    <citation type="journal article" date="2004" name="Proc. Natl. Acad. Sci. U.S.A.">
        <title>Structural flexibility in the Burkholderia mallei genome.</title>
        <authorList>
            <person name="Nierman W.C."/>
            <person name="DeShazer D."/>
            <person name="Kim H.S."/>
            <person name="Tettelin H."/>
            <person name="Nelson K.E."/>
            <person name="Feldblyum T.V."/>
            <person name="Ulrich R.L."/>
            <person name="Ronning C.M."/>
            <person name="Brinkac L.M."/>
            <person name="Daugherty S.C."/>
            <person name="Davidsen T.D."/>
            <person name="DeBoy R.T."/>
            <person name="Dimitrov G."/>
            <person name="Dodson R.J."/>
            <person name="Durkin A.S."/>
            <person name="Gwinn M.L."/>
            <person name="Haft D.H."/>
            <person name="Khouri H.M."/>
            <person name="Kolonay J.F."/>
            <person name="Madupu R."/>
            <person name="Mohammoud Y."/>
            <person name="Nelson W.C."/>
            <person name="Radune D."/>
            <person name="Romero C.M."/>
            <person name="Sarria S."/>
            <person name="Selengut J."/>
            <person name="Shamblin C."/>
            <person name="Sullivan S.A."/>
            <person name="White O."/>
            <person name="Yu Y."/>
            <person name="Zafar N."/>
            <person name="Zhou L."/>
            <person name="Fraser C.M."/>
        </authorList>
    </citation>
    <scope>NUCLEOTIDE SEQUENCE [LARGE SCALE GENOMIC DNA]</scope>
    <source>
        <strain>ATCC 23344</strain>
    </source>
</reference>
<name>PUR9_BURMA</name>
<accession>Q62HA6</accession>
<dbReference type="EC" id="2.1.2.3" evidence="1"/>
<dbReference type="EC" id="3.5.4.10" evidence="1"/>
<dbReference type="EMBL" id="CP000010">
    <property type="protein sequence ID" value="AAU50213.1"/>
    <property type="molecule type" value="Genomic_DNA"/>
</dbReference>
<dbReference type="RefSeq" id="WP_004194285.1">
    <property type="nucleotide sequence ID" value="NC_006348.1"/>
</dbReference>
<dbReference type="RefSeq" id="YP_103914.1">
    <property type="nucleotide sequence ID" value="NC_006348.1"/>
</dbReference>
<dbReference type="SMR" id="Q62HA6"/>
<dbReference type="GeneID" id="92980050"/>
<dbReference type="KEGG" id="bma:BMA2356"/>
<dbReference type="PATRIC" id="fig|243160.12.peg.2427"/>
<dbReference type="eggNOG" id="COG0138">
    <property type="taxonomic scope" value="Bacteria"/>
</dbReference>
<dbReference type="HOGENOM" id="CLU_016316_5_2_4"/>
<dbReference type="UniPathway" id="UPA00074">
    <property type="reaction ID" value="UER00133"/>
</dbReference>
<dbReference type="UniPathway" id="UPA00074">
    <property type="reaction ID" value="UER00135"/>
</dbReference>
<dbReference type="Proteomes" id="UP000006693">
    <property type="component" value="Chromosome 1"/>
</dbReference>
<dbReference type="GO" id="GO:0005829">
    <property type="term" value="C:cytosol"/>
    <property type="evidence" value="ECO:0007669"/>
    <property type="project" value="TreeGrafter"/>
</dbReference>
<dbReference type="GO" id="GO:0003937">
    <property type="term" value="F:IMP cyclohydrolase activity"/>
    <property type="evidence" value="ECO:0007669"/>
    <property type="project" value="UniProtKB-UniRule"/>
</dbReference>
<dbReference type="GO" id="GO:0004643">
    <property type="term" value="F:phosphoribosylaminoimidazolecarboxamide formyltransferase activity"/>
    <property type="evidence" value="ECO:0007669"/>
    <property type="project" value="UniProtKB-UniRule"/>
</dbReference>
<dbReference type="GO" id="GO:0006189">
    <property type="term" value="P:'de novo' IMP biosynthetic process"/>
    <property type="evidence" value="ECO:0007669"/>
    <property type="project" value="UniProtKB-UniRule"/>
</dbReference>
<dbReference type="CDD" id="cd01421">
    <property type="entry name" value="IMPCH"/>
    <property type="match status" value="1"/>
</dbReference>
<dbReference type="FunFam" id="3.40.140.20:FF:000001">
    <property type="entry name" value="Bifunctional purine biosynthesis protein PurH"/>
    <property type="match status" value="1"/>
</dbReference>
<dbReference type="FunFam" id="3.40.140.20:FF:000002">
    <property type="entry name" value="Bifunctional purine biosynthesis protein PurH"/>
    <property type="match status" value="1"/>
</dbReference>
<dbReference type="FunFam" id="3.40.50.1380:FF:000001">
    <property type="entry name" value="Bifunctional purine biosynthesis protein PurH"/>
    <property type="match status" value="1"/>
</dbReference>
<dbReference type="Gene3D" id="3.40.140.20">
    <property type="match status" value="2"/>
</dbReference>
<dbReference type="Gene3D" id="3.40.50.1380">
    <property type="entry name" value="Methylglyoxal synthase-like domain"/>
    <property type="match status" value="1"/>
</dbReference>
<dbReference type="HAMAP" id="MF_00139">
    <property type="entry name" value="PurH"/>
    <property type="match status" value="1"/>
</dbReference>
<dbReference type="InterPro" id="IPR024051">
    <property type="entry name" value="AICAR_Tfase_dup_dom_sf"/>
</dbReference>
<dbReference type="InterPro" id="IPR016193">
    <property type="entry name" value="Cytidine_deaminase-like"/>
</dbReference>
<dbReference type="InterPro" id="IPR011607">
    <property type="entry name" value="MGS-like_dom"/>
</dbReference>
<dbReference type="InterPro" id="IPR036914">
    <property type="entry name" value="MGS-like_dom_sf"/>
</dbReference>
<dbReference type="InterPro" id="IPR002695">
    <property type="entry name" value="PurH-like"/>
</dbReference>
<dbReference type="NCBIfam" id="NF002049">
    <property type="entry name" value="PRK00881.1"/>
    <property type="match status" value="1"/>
</dbReference>
<dbReference type="NCBIfam" id="TIGR00355">
    <property type="entry name" value="purH"/>
    <property type="match status" value="1"/>
</dbReference>
<dbReference type="PANTHER" id="PTHR11692:SF0">
    <property type="entry name" value="BIFUNCTIONAL PURINE BIOSYNTHESIS PROTEIN ATIC"/>
    <property type="match status" value="1"/>
</dbReference>
<dbReference type="PANTHER" id="PTHR11692">
    <property type="entry name" value="BIFUNCTIONAL PURINE BIOSYNTHESIS PROTEIN PURH"/>
    <property type="match status" value="1"/>
</dbReference>
<dbReference type="Pfam" id="PF01808">
    <property type="entry name" value="AICARFT_IMPCHas"/>
    <property type="match status" value="1"/>
</dbReference>
<dbReference type="Pfam" id="PF02142">
    <property type="entry name" value="MGS"/>
    <property type="match status" value="1"/>
</dbReference>
<dbReference type="PIRSF" id="PIRSF000414">
    <property type="entry name" value="AICARFT_IMPCHas"/>
    <property type="match status" value="1"/>
</dbReference>
<dbReference type="SMART" id="SM00798">
    <property type="entry name" value="AICARFT_IMPCHas"/>
    <property type="match status" value="1"/>
</dbReference>
<dbReference type="SMART" id="SM00851">
    <property type="entry name" value="MGS"/>
    <property type="match status" value="1"/>
</dbReference>
<dbReference type="SUPFAM" id="SSF53927">
    <property type="entry name" value="Cytidine deaminase-like"/>
    <property type="match status" value="1"/>
</dbReference>
<dbReference type="SUPFAM" id="SSF52335">
    <property type="entry name" value="Methylglyoxal synthase-like"/>
    <property type="match status" value="1"/>
</dbReference>
<dbReference type="PROSITE" id="PS51855">
    <property type="entry name" value="MGS"/>
    <property type="match status" value="1"/>
</dbReference>